<gene>
    <name evidence="1" type="primary">lipB</name>
    <name type="ordered locus">CBUD_1350</name>
</gene>
<organism>
    <name type="scientific">Coxiella burnetii (strain Dugway 5J108-111)</name>
    <dbReference type="NCBI Taxonomy" id="434922"/>
    <lineage>
        <taxon>Bacteria</taxon>
        <taxon>Pseudomonadati</taxon>
        <taxon>Pseudomonadota</taxon>
        <taxon>Gammaproteobacteria</taxon>
        <taxon>Legionellales</taxon>
        <taxon>Coxiellaceae</taxon>
        <taxon>Coxiella</taxon>
    </lineage>
</organism>
<dbReference type="EC" id="2.3.1.181" evidence="1"/>
<dbReference type="EMBL" id="CP000733">
    <property type="protein sequence ID" value="ABS76738.1"/>
    <property type="molecule type" value="Genomic_DNA"/>
</dbReference>
<dbReference type="RefSeq" id="WP_011997046.1">
    <property type="nucleotide sequence ID" value="NC_009727.1"/>
</dbReference>
<dbReference type="SMR" id="A9KFW4"/>
<dbReference type="KEGG" id="cbd:CBUD_1350"/>
<dbReference type="HOGENOM" id="CLU_035168_3_1_6"/>
<dbReference type="UniPathway" id="UPA00538">
    <property type="reaction ID" value="UER00592"/>
</dbReference>
<dbReference type="Proteomes" id="UP000008555">
    <property type="component" value="Chromosome"/>
</dbReference>
<dbReference type="GO" id="GO:0005737">
    <property type="term" value="C:cytoplasm"/>
    <property type="evidence" value="ECO:0007669"/>
    <property type="project" value="UniProtKB-SubCell"/>
</dbReference>
<dbReference type="GO" id="GO:0033819">
    <property type="term" value="F:lipoyl(octanoyl) transferase activity"/>
    <property type="evidence" value="ECO:0007669"/>
    <property type="project" value="UniProtKB-EC"/>
</dbReference>
<dbReference type="GO" id="GO:0036211">
    <property type="term" value="P:protein modification process"/>
    <property type="evidence" value="ECO:0007669"/>
    <property type="project" value="InterPro"/>
</dbReference>
<dbReference type="CDD" id="cd16444">
    <property type="entry name" value="LipB"/>
    <property type="match status" value="1"/>
</dbReference>
<dbReference type="FunFam" id="3.30.930.10:FF:000020">
    <property type="entry name" value="Octanoyltransferase"/>
    <property type="match status" value="1"/>
</dbReference>
<dbReference type="Gene3D" id="3.30.930.10">
    <property type="entry name" value="Bira Bifunctional Protein, Domain 2"/>
    <property type="match status" value="1"/>
</dbReference>
<dbReference type="HAMAP" id="MF_00013">
    <property type="entry name" value="LipB"/>
    <property type="match status" value="1"/>
</dbReference>
<dbReference type="InterPro" id="IPR045864">
    <property type="entry name" value="aa-tRNA-synth_II/BPL/LPL"/>
</dbReference>
<dbReference type="InterPro" id="IPR004143">
    <property type="entry name" value="BPL_LPL_catalytic"/>
</dbReference>
<dbReference type="InterPro" id="IPR000544">
    <property type="entry name" value="Octanoyltransferase"/>
</dbReference>
<dbReference type="InterPro" id="IPR020605">
    <property type="entry name" value="Octanoyltransferase_CS"/>
</dbReference>
<dbReference type="NCBIfam" id="TIGR00214">
    <property type="entry name" value="lipB"/>
    <property type="match status" value="1"/>
</dbReference>
<dbReference type="NCBIfam" id="NF010922">
    <property type="entry name" value="PRK14342.1"/>
    <property type="match status" value="1"/>
</dbReference>
<dbReference type="PANTHER" id="PTHR10993:SF7">
    <property type="entry name" value="LIPOYLTRANSFERASE 2, MITOCHONDRIAL-RELATED"/>
    <property type="match status" value="1"/>
</dbReference>
<dbReference type="PANTHER" id="PTHR10993">
    <property type="entry name" value="OCTANOYLTRANSFERASE"/>
    <property type="match status" value="1"/>
</dbReference>
<dbReference type="Pfam" id="PF21948">
    <property type="entry name" value="LplA-B_cat"/>
    <property type="match status" value="1"/>
</dbReference>
<dbReference type="PIRSF" id="PIRSF016262">
    <property type="entry name" value="LPLase"/>
    <property type="match status" value="1"/>
</dbReference>
<dbReference type="SUPFAM" id="SSF55681">
    <property type="entry name" value="Class II aaRS and biotin synthetases"/>
    <property type="match status" value="1"/>
</dbReference>
<dbReference type="PROSITE" id="PS51733">
    <property type="entry name" value="BPL_LPL_CATALYTIC"/>
    <property type="match status" value="1"/>
</dbReference>
<dbReference type="PROSITE" id="PS01313">
    <property type="entry name" value="LIPB"/>
    <property type="match status" value="1"/>
</dbReference>
<sequence>MNDVIIRQLAHLIPYQPLWEAMQTFTARRQSQTTDEIWFLEHEPVFTQGLAGKPEHILNSGNIPLIRTDRGGQVTYHGPGQLMMYLLLDLNRLGLSTRTFVRTIENTVAESLQEWGIPAQGKETAPGVYVDDKKICSIGLRVRKGFSYHGLALNVAMDLTPFSCINPCGFKGLMMTQIQDYVNPIEMDAVKRTIIPLFLKNFGYNQPAIMVETSLEFLIDDHLRSFSEKLGERETVTNSRQN</sequence>
<reference key="1">
    <citation type="journal article" date="2009" name="Infect. Immun.">
        <title>Comparative genomics reveal extensive transposon-mediated genomic plasticity and diversity among potential effector proteins within the genus Coxiella.</title>
        <authorList>
            <person name="Beare P.A."/>
            <person name="Unsworth N."/>
            <person name="Andoh M."/>
            <person name="Voth D.E."/>
            <person name="Omsland A."/>
            <person name="Gilk S.D."/>
            <person name="Williams K.P."/>
            <person name="Sobral B.W."/>
            <person name="Kupko J.J. III"/>
            <person name="Porcella S.F."/>
            <person name="Samuel J.E."/>
            <person name="Heinzen R.A."/>
        </authorList>
    </citation>
    <scope>NUCLEOTIDE SEQUENCE [LARGE SCALE GENOMIC DNA]</scope>
    <source>
        <strain>Dugway 5J108-111</strain>
    </source>
</reference>
<protein>
    <recommendedName>
        <fullName evidence="1">Octanoyltransferase</fullName>
        <ecNumber evidence="1">2.3.1.181</ecNumber>
    </recommendedName>
    <alternativeName>
        <fullName evidence="1">Lipoate-protein ligase B</fullName>
    </alternativeName>
    <alternativeName>
        <fullName evidence="1">Lipoyl/octanoyl transferase</fullName>
    </alternativeName>
    <alternativeName>
        <fullName evidence="1">Octanoyl-[acyl-carrier-protein]-protein N-octanoyltransferase</fullName>
    </alternativeName>
</protein>
<accession>A9KFW4</accession>
<name>LIPB_COXBN</name>
<proteinExistence type="inferred from homology"/>
<feature type="chain" id="PRO_1000073998" description="Octanoyltransferase">
    <location>
        <begin position="1"/>
        <end position="242"/>
    </location>
</feature>
<feature type="domain" description="BPL/LPL catalytic" evidence="2">
    <location>
        <begin position="31"/>
        <end position="206"/>
    </location>
</feature>
<feature type="active site" description="Acyl-thioester intermediate" evidence="1">
    <location>
        <position position="168"/>
    </location>
</feature>
<feature type="binding site" evidence="1">
    <location>
        <begin position="70"/>
        <end position="77"/>
    </location>
    <ligand>
        <name>substrate</name>
    </ligand>
</feature>
<feature type="binding site" evidence="1">
    <location>
        <begin position="137"/>
        <end position="139"/>
    </location>
    <ligand>
        <name>substrate</name>
    </ligand>
</feature>
<feature type="binding site" evidence="1">
    <location>
        <begin position="150"/>
        <end position="152"/>
    </location>
    <ligand>
        <name>substrate</name>
    </ligand>
</feature>
<feature type="site" description="Lowers pKa of active site Cys" evidence="1">
    <location>
        <position position="134"/>
    </location>
</feature>
<keyword id="KW-0012">Acyltransferase</keyword>
<keyword id="KW-0963">Cytoplasm</keyword>
<keyword id="KW-0808">Transferase</keyword>
<comment type="function">
    <text evidence="1">Catalyzes the transfer of endogenously produced octanoic acid from octanoyl-acyl-carrier-protein onto the lipoyl domains of lipoate-dependent enzymes. Lipoyl-ACP can also act as a substrate although octanoyl-ACP is likely to be the physiological substrate.</text>
</comment>
<comment type="catalytic activity">
    <reaction evidence="1">
        <text>octanoyl-[ACP] + L-lysyl-[protein] = N(6)-octanoyl-L-lysyl-[protein] + holo-[ACP] + H(+)</text>
        <dbReference type="Rhea" id="RHEA:17665"/>
        <dbReference type="Rhea" id="RHEA-COMP:9636"/>
        <dbReference type="Rhea" id="RHEA-COMP:9685"/>
        <dbReference type="Rhea" id="RHEA-COMP:9752"/>
        <dbReference type="Rhea" id="RHEA-COMP:9928"/>
        <dbReference type="ChEBI" id="CHEBI:15378"/>
        <dbReference type="ChEBI" id="CHEBI:29969"/>
        <dbReference type="ChEBI" id="CHEBI:64479"/>
        <dbReference type="ChEBI" id="CHEBI:78463"/>
        <dbReference type="ChEBI" id="CHEBI:78809"/>
        <dbReference type="EC" id="2.3.1.181"/>
    </reaction>
</comment>
<comment type="pathway">
    <text evidence="1">Protein modification; protein lipoylation via endogenous pathway; protein N(6)-(lipoyl)lysine from octanoyl-[acyl-carrier-protein]: step 1/2.</text>
</comment>
<comment type="subcellular location">
    <subcellularLocation>
        <location evidence="1">Cytoplasm</location>
    </subcellularLocation>
</comment>
<comment type="miscellaneous">
    <text evidence="1">In the reaction, the free carboxyl group of octanoic acid is attached via an amide linkage to the epsilon-amino group of a specific lysine residue of lipoyl domains of lipoate-dependent enzymes.</text>
</comment>
<comment type="similarity">
    <text evidence="1">Belongs to the LipB family.</text>
</comment>
<evidence type="ECO:0000255" key="1">
    <source>
        <dbReference type="HAMAP-Rule" id="MF_00013"/>
    </source>
</evidence>
<evidence type="ECO:0000255" key="2">
    <source>
        <dbReference type="PROSITE-ProRule" id="PRU01067"/>
    </source>
</evidence>